<proteinExistence type="evidence at transcript level"/>
<evidence type="ECO:0000250" key="1">
    <source>
        <dbReference type="UniProtKB" id="Q70E20"/>
    </source>
</evidence>
<evidence type="ECO:0000250" key="2">
    <source>
        <dbReference type="UniProtKB" id="Q8TER0"/>
    </source>
</evidence>
<evidence type="ECO:0000255" key="3"/>
<evidence type="ECO:0000255" key="4">
    <source>
        <dbReference type="PROSITE-ProRule" id="PRU00076"/>
    </source>
</evidence>
<evidence type="ECO:0000255" key="5">
    <source>
        <dbReference type="PROSITE-ProRule" id="PRU00302"/>
    </source>
</evidence>
<evidence type="ECO:0000255" key="6">
    <source>
        <dbReference type="PROSITE-ProRule" id="PRU00316"/>
    </source>
</evidence>
<evidence type="ECO:0000255" key="7">
    <source>
        <dbReference type="PROSITE-ProRule" id="PRU00570"/>
    </source>
</evidence>
<evidence type="ECO:0000256" key="8">
    <source>
        <dbReference type="SAM" id="MobiDB-lite"/>
    </source>
</evidence>
<evidence type="ECO:0000269" key="9">
    <source>
    </source>
</evidence>
<evidence type="ECO:0000303" key="10">
    <source>
    </source>
</evidence>
<evidence type="ECO:0000305" key="11"/>
<evidence type="ECO:0000312" key="12">
    <source>
        <dbReference type="RGD" id="1566079"/>
    </source>
</evidence>
<feature type="signal peptide" evidence="3">
    <location>
        <begin position="1"/>
        <end position="24"/>
    </location>
</feature>
<feature type="chain" id="PRO_0000299555" description="Sushi, nidogen and EGF-like domain-containing protein 1">
    <location>
        <begin position="25"/>
        <end position="1403"/>
    </location>
</feature>
<feature type="domain" description="NIDO" evidence="7">
    <location>
        <begin position="103"/>
        <end position="258"/>
    </location>
</feature>
<feature type="domain" description="EGF-like 1" evidence="4">
    <location>
        <begin position="268"/>
        <end position="309"/>
    </location>
</feature>
<feature type="domain" description="EGF-like 2" evidence="4">
    <location>
        <begin position="311"/>
        <end position="347"/>
    </location>
</feature>
<feature type="domain" description="EGF-like 3" evidence="4">
    <location>
        <begin position="349"/>
        <end position="385"/>
    </location>
</feature>
<feature type="domain" description="EGF-like 4; calcium-binding" evidence="4">
    <location>
        <begin position="387"/>
        <end position="423"/>
    </location>
</feature>
<feature type="domain" description="EGF-like 5" evidence="4">
    <location>
        <begin position="429"/>
        <end position="465"/>
    </location>
</feature>
<feature type="domain" description="EGF-like 6" evidence="4">
    <location>
        <begin position="468"/>
        <end position="500"/>
    </location>
</feature>
<feature type="domain" description="EGF-like 7" evidence="4">
    <location>
        <begin position="541"/>
        <end position="577"/>
    </location>
</feature>
<feature type="domain" description="EGF-like 8" evidence="4">
    <location>
        <begin position="580"/>
        <end position="616"/>
    </location>
</feature>
<feature type="domain" description="EGF-like 9" evidence="4">
    <location>
        <begin position="619"/>
        <end position="655"/>
    </location>
</feature>
<feature type="domain" description="EGF-like 10" evidence="4">
    <location>
        <begin position="657"/>
        <end position="693"/>
    </location>
</feature>
<feature type="domain" description="Sushi" evidence="5">
    <location>
        <begin position="696"/>
        <end position="753"/>
    </location>
</feature>
<feature type="domain" description="EGF-like 11; calcium-binding" evidence="4">
    <location>
        <begin position="753"/>
        <end position="789"/>
    </location>
</feature>
<feature type="domain" description="EGF-like 12; calcium-binding" evidence="4">
    <location>
        <begin position="791"/>
        <end position="827"/>
    </location>
</feature>
<feature type="domain" description="EGF-like 13" evidence="4">
    <location>
        <begin position="829"/>
        <end position="865"/>
    </location>
</feature>
<feature type="domain" description="EGF-like 14" evidence="4">
    <location>
        <begin position="867"/>
        <end position="903"/>
    </location>
</feature>
<feature type="domain" description="Fibronectin type-III 1" evidence="6">
    <location>
        <begin position="908"/>
        <end position="1006"/>
    </location>
</feature>
<feature type="domain" description="Fibronectin type-III 2" evidence="6">
    <location>
        <begin position="1007"/>
        <end position="1105"/>
    </location>
</feature>
<feature type="domain" description="Fibronectin type-III 3" evidence="6">
    <location>
        <begin position="1106"/>
        <end position="1200"/>
    </location>
</feature>
<feature type="domain" description="EGF-like 15" evidence="4">
    <location>
        <begin position="1306"/>
        <end position="1342"/>
    </location>
</feature>
<feature type="region of interest" description="Disordered" evidence="8">
    <location>
        <begin position="1295"/>
        <end position="1314"/>
    </location>
</feature>
<feature type="compositionally biased region" description="Polar residues" evidence="8">
    <location>
        <begin position="1305"/>
        <end position="1314"/>
    </location>
</feature>
<feature type="glycosylation site" description="N-linked (GlcNAc...) asparagine" evidence="3">
    <location>
        <position position="292"/>
    </location>
</feature>
<feature type="glycosylation site" description="N-linked (GlcNAc...) asparagine" evidence="3">
    <location>
        <position position="408"/>
    </location>
</feature>
<feature type="glycosylation site" description="N-linked (GlcNAc...) asparagine" evidence="3">
    <location>
        <position position="484"/>
    </location>
</feature>
<feature type="glycosylation site" description="N-linked (GlcNAc...) asparagine" evidence="3">
    <location>
        <position position="536"/>
    </location>
</feature>
<feature type="glycosylation site" description="N-linked (GlcNAc...) asparagine" evidence="3">
    <location>
        <position position="712"/>
    </location>
</feature>
<feature type="glycosylation site" description="N-linked (GlcNAc...) asparagine" evidence="3">
    <location>
        <position position="886"/>
    </location>
</feature>
<feature type="glycosylation site" description="N-linked (GlcNAc...) asparagine" evidence="3">
    <location>
        <position position="977"/>
    </location>
</feature>
<feature type="glycosylation site" description="N-linked (GlcNAc...) asparagine" evidence="3">
    <location>
        <position position="1015"/>
    </location>
</feature>
<feature type="glycosylation site" description="N-linked (GlcNAc...) asparagine" evidence="3">
    <location>
        <position position="1109"/>
    </location>
</feature>
<feature type="glycosylation site" description="N-linked (GlcNAc...) asparagine" evidence="3">
    <location>
        <position position="1139"/>
    </location>
</feature>
<feature type="glycosylation site" description="N-linked (GlcNAc...) asparagine" evidence="3">
    <location>
        <position position="1298"/>
    </location>
</feature>
<feature type="disulfide bond" evidence="4">
    <location>
        <begin position="272"/>
        <end position="284"/>
    </location>
</feature>
<feature type="disulfide bond" evidence="4">
    <location>
        <begin position="278"/>
        <end position="297"/>
    </location>
</feature>
<feature type="disulfide bond" evidence="4">
    <location>
        <begin position="299"/>
        <end position="308"/>
    </location>
</feature>
<feature type="disulfide bond" evidence="4">
    <location>
        <begin position="315"/>
        <end position="326"/>
    </location>
</feature>
<feature type="disulfide bond" evidence="4">
    <location>
        <begin position="320"/>
        <end position="335"/>
    </location>
</feature>
<feature type="disulfide bond" evidence="4">
    <location>
        <begin position="337"/>
        <end position="346"/>
    </location>
</feature>
<feature type="disulfide bond" evidence="4">
    <location>
        <begin position="353"/>
        <end position="364"/>
    </location>
</feature>
<feature type="disulfide bond" evidence="4">
    <location>
        <begin position="358"/>
        <end position="373"/>
    </location>
</feature>
<feature type="disulfide bond" evidence="4">
    <location>
        <begin position="375"/>
        <end position="384"/>
    </location>
</feature>
<feature type="disulfide bond" evidence="4">
    <location>
        <begin position="391"/>
        <end position="402"/>
    </location>
</feature>
<feature type="disulfide bond" evidence="4">
    <location>
        <begin position="396"/>
        <end position="411"/>
    </location>
</feature>
<feature type="disulfide bond" evidence="4">
    <location>
        <begin position="413"/>
        <end position="422"/>
    </location>
</feature>
<feature type="disulfide bond" evidence="4">
    <location>
        <begin position="433"/>
        <end position="444"/>
    </location>
</feature>
<feature type="disulfide bond" evidence="4">
    <location>
        <begin position="438"/>
        <end position="453"/>
    </location>
</feature>
<feature type="disulfide bond" evidence="4">
    <location>
        <begin position="455"/>
        <end position="464"/>
    </location>
</feature>
<feature type="disulfide bond" evidence="4">
    <location>
        <begin position="472"/>
        <end position="480"/>
    </location>
</feature>
<feature type="disulfide bond" evidence="4">
    <location>
        <begin position="474"/>
        <end position="488"/>
    </location>
</feature>
<feature type="disulfide bond" evidence="4">
    <location>
        <begin position="490"/>
        <end position="499"/>
    </location>
</feature>
<feature type="disulfide bond" evidence="4">
    <location>
        <begin position="545"/>
        <end position="556"/>
    </location>
</feature>
<feature type="disulfide bond" evidence="4">
    <location>
        <begin position="550"/>
        <end position="565"/>
    </location>
</feature>
<feature type="disulfide bond" evidence="4">
    <location>
        <begin position="567"/>
        <end position="576"/>
    </location>
</feature>
<feature type="disulfide bond" evidence="4">
    <location>
        <begin position="584"/>
        <end position="595"/>
    </location>
</feature>
<feature type="disulfide bond" evidence="4">
    <location>
        <begin position="589"/>
        <end position="604"/>
    </location>
</feature>
<feature type="disulfide bond" evidence="4">
    <location>
        <begin position="606"/>
        <end position="615"/>
    </location>
</feature>
<feature type="disulfide bond" evidence="4">
    <location>
        <begin position="623"/>
        <end position="634"/>
    </location>
</feature>
<feature type="disulfide bond" evidence="4">
    <location>
        <begin position="628"/>
        <end position="643"/>
    </location>
</feature>
<feature type="disulfide bond" evidence="4">
    <location>
        <begin position="645"/>
        <end position="654"/>
    </location>
</feature>
<feature type="disulfide bond" evidence="4">
    <location>
        <begin position="661"/>
        <end position="672"/>
    </location>
</feature>
<feature type="disulfide bond" evidence="4">
    <location>
        <begin position="666"/>
        <end position="681"/>
    </location>
</feature>
<feature type="disulfide bond" evidence="4">
    <location>
        <begin position="683"/>
        <end position="692"/>
    </location>
</feature>
<feature type="disulfide bond" evidence="5">
    <location>
        <begin position="698"/>
        <end position="739"/>
    </location>
</feature>
<feature type="disulfide bond" evidence="5">
    <location>
        <begin position="724"/>
        <end position="751"/>
    </location>
</feature>
<feature type="disulfide bond" evidence="4">
    <location>
        <begin position="757"/>
        <end position="768"/>
    </location>
</feature>
<feature type="disulfide bond" evidence="4">
    <location>
        <begin position="762"/>
        <end position="777"/>
    </location>
</feature>
<feature type="disulfide bond" evidence="4">
    <location>
        <begin position="779"/>
        <end position="788"/>
    </location>
</feature>
<feature type="disulfide bond" evidence="4">
    <location>
        <begin position="795"/>
        <end position="806"/>
    </location>
</feature>
<feature type="disulfide bond" evidence="4">
    <location>
        <begin position="800"/>
        <end position="815"/>
    </location>
</feature>
<feature type="disulfide bond" evidence="4">
    <location>
        <begin position="817"/>
        <end position="826"/>
    </location>
</feature>
<feature type="disulfide bond" evidence="4">
    <location>
        <begin position="833"/>
        <end position="844"/>
    </location>
</feature>
<feature type="disulfide bond" evidence="4">
    <location>
        <begin position="838"/>
        <end position="853"/>
    </location>
</feature>
<feature type="disulfide bond" evidence="4">
    <location>
        <begin position="855"/>
        <end position="864"/>
    </location>
</feature>
<feature type="disulfide bond" evidence="4">
    <location>
        <begin position="871"/>
        <end position="882"/>
    </location>
</feature>
<feature type="disulfide bond" evidence="4">
    <location>
        <begin position="876"/>
        <end position="891"/>
    </location>
</feature>
<feature type="disulfide bond" evidence="4">
    <location>
        <begin position="893"/>
        <end position="902"/>
    </location>
</feature>
<feature type="disulfide bond" evidence="4">
    <location>
        <begin position="1310"/>
        <end position="1321"/>
    </location>
</feature>
<feature type="disulfide bond" evidence="4">
    <location>
        <begin position="1315"/>
        <end position="1330"/>
    </location>
</feature>
<feature type="disulfide bond" evidence="4">
    <location>
        <begin position="1332"/>
        <end position="1341"/>
    </location>
</feature>
<feature type="sequence conflict" description="In Ref. 1; AAQ04556." evidence="11" ref="1">
    <original>F</original>
    <variation>S</variation>
    <location>
        <position position="494"/>
    </location>
</feature>
<feature type="sequence conflict" description="In Ref. 1; AAQ04556." evidence="11" ref="1">
    <original>C</original>
    <variation>Y</variation>
    <location>
        <position position="595"/>
    </location>
</feature>
<feature type="sequence conflict" description="In Ref. 1; AAQ04556." evidence="11" ref="1">
    <original>C</original>
    <variation>Y</variation>
    <location>
        <position position="762"/>
    </location>
</feature>
<feature type="sequence conflict" description="In Ref. 1; AAQ04556." evidence="11" ref="1">
    <original>C</original>
    <variation>Y</variation>
    <location>
        <position position="826"/>
    </location>
</feature>
<feature type="sequence conflict" description="In Ref. 1; AAQ04556." evidence="11" ref="1">
    <original>D</original>
    <variation>N</variation>
    <location>
        <position position="869"/>
    </location>
</feature>
<reference key="1">
    <citation type="journal article" date="2004" name="Nature">
        <title>Genome sequence of the Brown Norway rat yields insights into mammalian evolution.</title>
        <authorList>
            <person name="Gibbs R.A."/>
            <person name="Weinstock G.M."/>
            <person name="Metzker M.L."/>
            <person name="Muzny D.M."/>
            <person name="Sodergren E.J."/>
            <person name="Scherer S."/>
            <person name="Scott G."/>
            <person name="Steffen D."/>
            <person name="Worley K.C."/>
            <person name="Burch P.E."/>
            <person name="Okwuonu G."/>
            <person name="Hines S."/>
            <person name="Lewis L."/>
            <person name="Deramo C."/>
            <person name="Delgado O."/>
            <person name="Dugan-Rocha S."/>
            <person name="Miner G."/>
            <person name="Morgan M."/>
            <person name="Hawes A."/>
            <person name="Gill R."/>
            <person name="Holt R.A."/>
            <person name="Adams M.D."/>
            <person name="Amanatides P.G."/>
            <person name="Baden-Tillson H."/>
            <person name="Barnstead M."/>
            <person name="Chin S."/>
            <person name="Evans C.A."/>
            <person name="Ferriera S."/>
            <person name="Fosler C."/>
            <person name="Glodek A."/>
            <person name="Gu Z."/>
            <person name="Jennings D."/>
            <person name="Kraft C.L."/>
            <person name="Nguyen T."/>
            <person name="Pfannkoch C.M."/>
            <person name="Sitter C."/>
            <person name="Sutton G.G."/>
            <person name="Venter J.C."/>
            <person name="Woodage T."/>
            <person name="Smith D."/>
            <person name="Lee H.-M."/>
            <person name="Gustafson E."/>
            <person name="Cahill P."/>
            <person name="Kana A."/>
            <person name="Doucette-Stamm L."/>
            <person name="Weinstock K."/>
            <person name="Fechtel K."/>
            <person name="Weiss R.B."/>
            <person name="Dunn D.M."/>
            <person name="Green E.D."/>
            <person name="Blakesley R.W."/>
            <person name="Bouffard G.G."/>
            <person name="De Jong P.J."/>
            <person name="Osoegawa K."/>
            <person name="Zhu B."/>
            <person name="Marra M."/>
            <person name="Schein J."/>
            <person name="Bosdet I."/>
            <person name="Fjell C."/>
            <person name="Jones S."/>
            <person name="Krzywinski M."/>
            <person name="Mathewson C."/>
            <person name="Siddiqui A."/>
            <person name="Wye N."/>
            <person name="McPherson J."/>
            <person name="Zhao S."/>
            <person name="Fraser C.M."/>
            <person name="Shetty J."/>
            <person name="Shatsman S."/>
            <person name="Geer K."/>
            <person name="Chen Y."/>
            <person name="Abramzon S."/>
            <person name="Nierman W.C."/>
            <person name="Havlak P.H."/>
            <person name="Chen R."/>
            <person name="Durbin K.J."/>
            <person name="Egan A."/>
            <person name="Ren Y."/>
            <person name="Song X.-Z."/>
            <person name="Li B."/>
            <person name="Liu Y."/>
            <person name="Qin X."/>
            <person name="Cawley S."/>
            <person name="Cooney A.J."/>
            <person name="D'Souza L.M."/>
            <person name="Martin K."/>
            <person name="Wu J.Q."/>
            <person name="Gonzalez-Garay M.L."/>
            <person name="Jackson A.R."/>
            <person name="Kalafus K.J."/>
            <person name="McLeod M.P."/>
            <person name="Milosavljevic A."/>
            <person name="Virk D."/>
            <person name="Volkov A."/>
            <person name="Wheeler D.A."/>
            <person name="Zhang Z."/>
            <person name="Bailey J.A."/>
            <person name="Eichler E.E."/>
            <person name="Tuzun E."/>
            <person name="Birney E."/>
            <person name="Mongin E."/>
            <person name="Ureta-Vidal A."/>
            <person name="Woodwark C."/>
            <person name="Zdobnov E."/>
            <person name="Bork P."/>
            <person name="Suyama M."/>
            <person name="Torrents D."/>
            <person name="Alexandersson M."/>
            <person name="Trask B.J."/>
            <person name="Young J.M."/>
            <person name="Huang H."/>
            <person name="Wang H."/>
            <person name="Xing H."/>
            <person name="Daniels S."/>
            <person name="Gietzen D."/>
            <person name="Schmidt J."/>
            <person name="Stevens K."/>
            <person name="Vitt U."/>
            <person name="Wingrove J."/>
            <person name="Camara F."/>
            <person name="Mar Alba M."/>
            <person name="Abril J.F."/>
            <person name="Guigo R."/>
            <person name="Smit A."/>
            <person name="Dubchak I."/>
            <person name="Rubin E.M."/>
            <person name="Couronne O."/>
            <person name="Poliakov A."/>
            <person name="Huebner N."/>
            <person name="Ganten D."/>
            <person name="Goesele C."/>
            <person name="Hummel O."/>
            <person name="Kreitler T."/>
            <person name="Lee Y.-A."/>
            <person name="Monti J."/>
            <person name="Schulz H."/>
            <person name="Zimdahl H."/>
            <person name="Himmelbauer H."/>
            <person name="Lehrach H."/>
            <person name="Jacob H.J."/>
            <person name="Bromberg S."/>
            <person name="Gullings-Handley J."/>
            <person name="Jensen-Seaman M.I."/>
            <person name="Kwitek A.E."/>
            <person name="Lazar J."/>
            <person name="Pasko D."/>
            <person name="Tonellato P.J."/>
            <person name="Twigger S."/>
            <person name="Ponting C.P."/>
            <person name="Duarte J.M."/>
            <person name="Rice S."/>
            <person name="Goodstadt L."/>
            <person name="Beatson S.A."/>
            <person name="Emes R.D."/>
            <person name="Winter E.E."/>
            <person name="Webber C."/>
            <person name="Brandt P."/>
            <person name="Nyakatura G."/>
            <person name="Adetobi M."/>
            <person name="Chiaromonte F."/>
            <person name="Elnitski L."/>
            <person name="Eswara P."/>
            <person name="Hardison R.C."/>
            <person name="Hou M."/>
            <person name="Kolbe D."/>
            <person name="Makova K."/>
            <person name="Miller W."/>
            <person name="Nekrutenko A."/>
            <person name="Riemer C."/>
            <person name="Schwartz S."/>
            <person name="Taylor J."/>
            <person name="Yang S."/>
            <person name="Zhang Y."/>
            <person name="Lindpaintner K."/>
            <person name="Andrews T.D."/>
            <person name="Caccamo M."/>
            <person name="Clamp M."/>
            <person name="Clarke L."/>
            <person name="Curwen V."/>
            <person name="Durbin R.M."/>
            <person name="Eyras E."/>
            <person name="Searle S.M."/>
            <person name="Cooper G.M."/>
            <person name="Batzoglou S."/>
            <person name="Brudno M."/>
            <person name="Sidow A."/>
            <person name="Stone E.A."/>
            <person name="Payseur B.A."/>
            <person name="Bourque G."/>
            <person name="Lopez-Otin C."/>
            <person name="Puente X.S."/>
            <person name="Chakrabarti K."/>
            <person name="Chatterji S."/>
            <person name="Dewey C."/>
            <person name="Pachter L."/>
            <person name="Bray N."/>
            <person name="Yap V.B."/>
            <person name="Caspi A."/>
            <person name="Tesler G."/>
            <person name="Pevzner P.A."/>
            <person name="Haussler D."/>
            <person name="Roskin K.M."/>
            <person name="Baertsch R."/>
            <person name="Clawson H."/>
            <person name="Furey T.S."/>
            <person name="Hinrichs A.S."/>
            <person name="Karolchik D."/>
            <person name="Kent W.J."/>
            <person name="Rosenbloom K.R."/>
            <person name="Trumbower H."/>
            <person name="Weirauch M."/>
            <person name="Cooper D.N."/>
            <person name="Stenson P.D."/>
            <person name="Ma B."/>
            <person name="Brent M."/>
            <person name="Arumugam M."/>
            <person name="Shteynberg D."/>
            <person name="Copley R.R."/>
            <person name="Taylor M.S."/>
            <person name="Riethman H."/>
            <person name="Mudunuri U."/>
            <person name="Peterson J."/>
            <person name="Guyer M."/>
            <person name="Felsenfeld A."/>
            <person name="Old S."/>
            <person name="Mockrin S."/>
            <person name="Collins F.S."/>
        </authorList>
    </citation>
    <scope>NUCLEOTIDE SEQUENCE [LARGE SCALE GENOMIC DNA]</scope>
    <source>
        <strain>Brown Norway</strain>
    </source>
</reference>
<reference key="2">
    <citation type="journal article" date="2004" name="J. Biol. Chem.">
        <title>Insulin-response element-binding protein 1: a novel Akt substrate involved in transcriptional action of insulin.</title>
        <authorList>
            <person name="Villafuerte B.C."/>
            <person name="Phillips L.S."/>
            <person name="Rane M.J."/>
            <person name="Zhao W."/>
        </authorList>
    </citation>
    <scope>NUCLEOTIDE SEQUENCE [MRNA] OF 396-1403</scope>
    <scope>TISSUE SPECIFICITY</scope>
    <source>
        <strain>Sprague-Dawley</strain>
    </source>
</reference>
<keyword id="KW-0106">Calcium</keyword>
<keyword id="KW-1015">Disulfide bond</keyword>
<keyword id="KW-0245">EGF-like domain</keyword>
<keyword id="KW-0272">Extracellular matrix</keyword>
<keyword id="KW-0325">Glycoprotein</keyword>
<keyword id="KW-0597">Phosphoprotein</keyword>
<keyword id="KW-1185">Reference proteome</keyword>
<keyword id="KW-0677">Repeat</keyword>
<keyword id="KW-0964">Secreted</keyword>
<keyword id="KW-0732">Signal</keyword>
<keyword id="KW-0768">Sushi</keyword>
<name>SNED1_RAT</name>
<organism>
    <name type="scientific">Rattus norvegicus</name>
    <name type="common">Rat</name>
    <dbReference type="NCBI Taxonomy" id="10116"/>
    <lineage>
        <taxon>Eukaryota</taxon>
        <taxon>Metazoa</taxon>
        <taxon>Chordata</taxon>
        <taxon>Craniata</taxon>
        <taxon>Vertebrata</taxon>
        <taxon>Euteleostomi</taxon>
        <taxon>Mammalia</taxon>
        <taxon>Eutheria</taxon>
        <taxon>Euarchontoglires</taxon>
        <taxon>Glires</taxon>
        <taxon>Rodentia</taxon>
        <taxon>Myomorpha</taxon>
        <taxon>Muroidea</taxon>
        <taxon>Muridae</taxon>
        <taxon>Murinae</taxon>
        <taxon>Rattus</taxon>
    </lineage>
</organism>
<protein>
    <recommendedName>
        <fullName evidence="11">Sushi, nidogen and EGF-like domain-containing protein 1</fullName>
    </recommendedName>
    <alternativeName>
        <fullName evidence="10">Insulin-responsive sequence DNA-binding protein 1</fullName>
        <shortName evidence="10">IRE-BP1</shortName>
    </alternativeName>
</protein>
<dbReference type="EMBL" id="AABR03068156">
    <property type="status" value="NOT_ANNOTATED_CDS"/>
    <property type="molecule type" value="Genomic_DNA"/>
</dbReference>
<dbReference type="EMBL" id="AABR03069106">
    <property type="status" value="NOT_ANNOTATED_CDS"/>
    <property type="molecule type" value="Genomic_DNA"/>
</dbReference>
<dbReference type="EMBL" id="AABR03069488">
    <property type="status" value="NOT_ANNOTATED_CDS"/>
    <property type="molecule type" value="Genomic_DNA"/>
</dbReference>
<dbReference type="EMBL" id="AABR03071665">
    <property type="status" value="NOT_ANNOTATED_CDS"/>
    <property type="molecule type" value="Genomic_DNA"/>
</dbReference>
<dbReference type="EMBL" id="AABR03072503">
    <property type="status" value="NOT_ANNOTATED_CDS"/>
    <property type="molecule type" value="Genomic_DNA"/>
</dbReference>
<dbReference type="EMBL" id="AF439715">
    <property type="protein sequence ID" value="AAQ04556.1"/>
    <property type="molecule type" value="mRNA"/>
</dbReference>
<dbReference type="EMBL" id="AF439719">
    <property type="protein sequence ID" value="AAQ04601.1"/>
    <property type="molecule type" value="mRNA"/>
</dbReference>
<dbReference type="RefSeq" id="NP_001400770.1">
    <property type="nucleotide sequence ID" value="NM_001413841.2"/>
</dbReference>
<dbReference type="RefSeq" id="XP_006245588.1">
    <property type="nucleotide sequence ID" value="XM_006245526.3"/>
</dbReference>
<dbReference type="SMR" id="Q5ZQU0"/>
<dbReference type="FunCoup" id="Q5ZQU0">
    <property type="interactions" value="175"/>
</dbReference>
<dbReference type="STRING" id="10116.ENSRNOP00000022290"/>
<dbReference type="GlyCosmos" id="Q5ZQU0">
    <property type="glycosylation" value="11 sites, No reported glycans"/>
</dbReference>
<dbReference type="GlyGen" id="Q5ZQU0">
    <property type="glycosylation" value="13 sites"/>
</dbReference>
<dbReference type="iPTMnet" id="Q5ZQU0"/>
<dbReference type="PhosphoSitePlus" id="Q5ZQU0"/>
<dbReference type="PaxDb" id="10116-ENSRNOP00000022290"/>
<dbReference type="Ensembl" id="ENSRNOT00000022290.7">
    <property type="protein sequence ID" value="ENSRNOP00000022290.7"/>
    <property type="gene ID" value="ENSRNOG00000023548.7"/>
</dbReference>
<dbReference type="GeneID" id="316638"/>
<dbReference type="UCSC" id="RGD:1566079">
    <property type="organism name" value="rat"/>
</dbReference>
<dbReference type="AGR" id="RGD:1566079"/>
<dbReference type="RGD" id="1566079">
    <property type="gene designation" value="Sned1"/>
</dbReference>
<dbReference type="eggNOG" id="KOG1217">
    <property type="taxonomic scope" value="Eukaryota"/>
</dbReference>
<dbReference type="eggNOG" id="KOG4291">
    <property type="taxonomic scope" value="Eukaryota"/>
</dbReference>
<dbReference type="GeneTree" id="ENSGT00940000160730"/>
<dbReference type="InParanoid" id="Q5ZQU0"/>
<dbReference type="OMA" id="RGYRRHY"/>
<dbReference type="OrthoDB" id="9972657at2759"/>
<dbReference type="PhylomeDB" id="Q5ZQU0"/>
<dbReference type="PRO" id="PR:Q5ZQU0"/>
<dbReference type="Proteomes" id="UP000002494">
    <property type="component" value="Chromosome 9"/>
</dbReference>
<dbReference type="GO" id="GO:0031012">
    <property type="term" value="C:extracellular matrix"/>
    <property type="evidence" value="ECO:0000266"/>
    <property type="project" value="RGD"/>
</dbReference>
<dbReference type="GO" id="GO:0005576">
    <property type="term" value="C:extracellular region"/>
    <property type="evidence" value="ECO:0007669"/>
    <property type="project" value="UniProtKB-KW"/>
</dbReference>
<dbReference type="GO" id="GO:0005509">
    <property type="term" value="F:calcium ion binding"/>
    <property type="evidence" value="ECO:0007669"/>
    <property type="project" value="InterPro"/>
</dbReference>
<dbReference type="GO" id="GO:0005112">
    <property type="term" value="F:Notch binding"/>
    <property type="evidence" value="ECO:0000318"/>
    <property type="project" value="GO_Central"/>
</dbReference>
<dbReference type="GO" id="GO:0007160">
    <property type="term" value="P:cell-matrix adhesion"/>
    <property type="evidence" value="ECO:0007669"/>
    <property type="project" value="InterPro"/>
</dbReference>
<dbReference type="CDD" id="cd00033">
    <property type="entry name" value="CCP"/>
    <property type="match status" value="1"/>
</dbReference>
<dbReference type="CDD" id="cd00054">
    <property type="entry name" value="EGF_CA"/>
    <property type="match status" value="13"/>
</dbReference>
<dbReference type="CDD" id="cd00063">
    <property type="entry name" value="FN3"/>
    <property type="match status" value="3"/>
</dbReference>
<dbReference type="FunFam" id="2.10.25.10:FF:000109">
    <property type="entry name" value="Notch homolog 4, [Drosophila]"/>
    <property type="match status" value="1"/>
</dbReference>
<dbReference type="FunFam" id="2.10.25.10:FF:000057">
    <property type="entry name" value="protocadherin Fat 1 isoform X2"/>
    <property type="match status" value="1"/>
</dbReference>
<dbReference type="FunFam" id="2.10.25.10:FF:000296">
    <property type="entry name" value="Sushi, nidogen and EGF like domains 1"/>
    <property type="match status" value="1"/>
</dbReference>
<dbReference type="FunFam" id="2.10.25.10:FF:000308">
    <property type="entry name" value="Sushi, nidogen and EGF like domains 1"/>
    <property type="match status" value="1"/>
</dbReference>
<dbReference type="FunFam" id="2.10.25.10:FF:000360">
    <property type="entry name" value="Sushi, nidogen and EGF like domains 1"/>
    <property type="match status" value="1"/>
</dbReference>
<dbReference type="FunFam" id="2.10.25.10:FF:000365">
    <property type="entry name" value="Sushi, nidogen and EGF like domains 1"/>
    <property type="match status" value="1"/>
</dbReference>
<dbReference type="FunFam" id="2.10.25.10:FF:000457">
    <property type="entry name" value="Sushi, nidogen and EGF like domains 1"/>
    <property type="match status" value="1"/>
</dbReference>
<dbReference type="FunFam" id="2.60.40.10:FF:000633">
    <property type="entry name" value="Sushi, nidogen and EGF like domains 1"/>
    <property type="match status" value="1"/>
</dbReference>
<dbReference type="FunFam" id="2.10.25.10:FF:000239">
    <property type="entry name" value="Sushi, nidogen and EGF-like domain-containing protein 1"/>
    <property type="match status" value="1"/>
</dbReference>
<dbReference type="FunFam" id="2.10.25.10:FF:000540">
    <property type="entry name" value="Sushi, nidogen and EGF-like domain-containing protein 1"/>
    <property type="match status" value="1"/>
</dbReference>
<dbReference type="FunFam" id="2.10.25.10:FF:000213">
    <property type="entry name" value="sushi, nidogen and EGF-like domain-containing protein 1"/>
    <property type="match status" value="1"/>
</dbReference>
<dbReference type="FunFam" id="2.10.25.10:FF:000251">
    <property type="entry name" value="sushi, nidogen and EGF-like domain-containing protein 1"/>
    <property type="match status" value="1"/>
</dbReference>
<dbReference type="FunFam" id="2.10.25.10:FF:000373">
    <property type="entry name" value="sushi, nidogen and EGF-like domain-containing protein 1"/>
    <property type="match status" value="1"/>
</dbReference>
<dbReference type="FunFam" id="2.10.25.10:FF:000283">
    <property type="entry name" value="sushi, nidogen and EGF-like domain-containing protein 1 isoform X2"/>
    <property type="match status" value="1"/>
</dbReference>
<dbReference type="FunFam" id="2.60.40.10:FF:000618">
    <property type="entry name" value="sushi, nidogen and EGF-like domain-containing protein 1 isoform X2"/>
    <property type="match status" value="1"/>
</dbReference>
<dbReference type="FunFam" id="2.60.40.10:FF:000870">
    <property type="entry name" value="sushi, nidogen and EGF-like domain-containing protein 1 isoform X3"/>
    <property type="match status" value="1"/>
</dbReference>
<dbReference type="FunFam" id="2.10.25.10:FF:000255">
    <property type="entry name" value="Sushi, nidogen and EGF-like domains 1"/>
    <property type="match status" value="1"/>
</dbReference>
<dbReference type="FunFam" id="2.10.25.10:FF:000006">
    <property type="entry name" value="Versican core protein-like isoform 1"/>
    <property type="match status" value="1"/>
</dbReference>
<dbReference type="Gene3D" id="2.60.40.10">
    <property type="entry name" value="Immunoglobulins"/>
    <property type="match status" value="3"/>
</dbReference>
<dbReference type="Gene3D" id="2.10.25.10">
    <property type="entry name" value="Laminin"/>
    <property type="match status" value="15"/>
</dbReference>
<dbReference type="InterPro" id="IPR001881">
    <property type="entry name" value="EGF-like_Ca-bd_dom"/>
</dbReference>
<dbReference type="InterPro" id="IPR013032">
    <property type="entry name" value="EGF-like_CS"/>
</dbReference>
<dbReference type="InterPro" id="IPR000742">
    <property type="entry name" value="EGF-like_dom"/>
</dbReference>
<dbReference type="InterPro" id="IPR000152">
    <property type="entry name" value="EGF-type_Asp/Asn_hydroxyl_site"/>
</dbReference>
<dbReference type="InterPro" id="IPR018097">
    <property type="entry name" value="EGF_Ca-bd_CS"/>
</dbReference>
<dbReference type="InterPro" id="IPR003961">
    <property type="entry name" value="FN3_dom"/>
</dbReference>
<dbReference type="InterPro" id="IPR036116">
    <property type="entry name" value="FN3_sf"/>
</dbReference>
<dbReference type="InterPro" id="IPR009030">
    <property type="entry name" value="Growth_fac_rcpt_cys_sf"/>
</dbReference>
<dbReference type="InterPro" id="IPR013783">
    <property type="entry name" value="Ig-like_fold"/>
</dbReference>
<dbReference type="InterPro" id="IPR003886">
    <property type="entry name" value="NIDO_dom"/>
</dbReference>
<dbReference type="InterPro" id="IPR035976">
    <property type="entry name" value="Sushi/SCR/CCP_sf"/>
</dbReference>
<dbReference type="InterPro" id="IPR000436">
    <property type="entry name" value="Sushi_SCR_CCP_dom"/>
</dbReference>
<dbReference type="PANTHER" id="PTHR12916">
    <property type="entry name" value="CYTOCHROME C OXIDASE POLYPEPTIDE VIC-2"/>
    <property type="match status" value="1"/>
</dbReference>
<dbReference type="PANTHER" id="PTHR12916:SF9">
    <property type="entry name" value="NEUROGENIC LOCUS NOTCH HOMOLOG PROTEIN 1-RELATED"/>
    <property type="match status" value="1"/>
</dbReference>
<dbReference type="Pfam" id="PF00008">
    <property type="entry name" value="EGF"/>
    <property type="match status" value="13"/>
</dbReference>
<dbReference type="Pfam" id="PF00041">
    <property type="entry name" value="fn3"/>
    <property type="match status" value="3"/>
</dbReference>
<dbReference type="Pfam" id="PF12661">
    <property type="entry name" value="hEGF"/>
    <property type="match status" value="1"/>
</dbReference>
<dbReference type="Pfam" id="PF06119">
    <property type="entry name" value="NIDO"/>
    <property type="match status" value="1"/>
</dbReference>
<dbReference type="PRINTS" id="PR00010">
    <property type="entry name" value="EGFBLOOD"/>
</dbReference>
<dbReference type="SMART" id="SM00032">
    <property type="entry name" value="CCP"/>
    <property type="match status" value="1"/>
</dbReference>
<dbReference type="SMART" id="SM00181">
    <property type="entry name" value="EGF"/>
    <property type="match status" value="15"/>
</dbReference>
<dbReference type="SMART" id="SM00179">
    <property type="entry name" value="EGF_CA"/>
    <property type="match status" value="14"/>
</dbReference>
<dbReference type="SMART" id="SM00060">
    <property type="entry name" value="FN3"/>
    <property type="match status" value="3"/>
</dbReference>
<dbReference type="SMART" id="SM00539">
    <property type="entry name" value="NIDO"/>
    <property type="match status" value="1"/>
</dbReference>
<dbReference type="SUPFAM" id="SSF57535">
    <property type="entry name" value="Complement control module/SCR domain"/>
    <property type="match status" value="1"/>
</dbReference>
<dbReference type="SUPFAM" id="SSF57196">
    <property type="entry name" value="EGF/Laminin"/>
    <property type="match status" value="13"/>
</dbReference>
<dbReference type="SUPFAM" id="SSF49265">
    <property type="entry name" value="Fibronectin type III"/>
    <property type="match status" value="2"/>
</dbReference>
<dbReference type="SUPFAM" id="SSF57184">
    <property type="entry name" value="Growth factor receptor domain"/>
    <property type="match status" value="1"/>
</dbReference>
<dbReference type="PROSITE" id="PS00010">
    <property type="entry name" value="ASX_HYDROXYL"/>
    <property type="match status" value="6"/>
</dbReference>
<dbReference type="PROSITE" id="PS00022">
    <property type="entry name" value="EGF_1"/>
    <property type="match status" value="15"/>
</dbReference>
<dbReference type="PROSITE" id="PS01186">
    <property type="entry name" value="EGF_2"/>
    <property type="match status" value="14"/>
</dbReference>
<dbReference type="PROSITE" id="PS50026">
    <property type="entry name" value="EGF_3"/>
    <property type="match status" value="15"/>
</dbReference>
<dbReference type="PROSITE" id="PS01187">
    <property type="entry name" value="EGF_CA"/>
    <property type="match status" value="3"/>
</dbReference>
<dbReference type="PROSITE" id="PS50853">
    <property type="entry name" value="FN3"/>
    <property type="match status" value="3"/>
</dbReference>
<dbReference type="PROSITE" id="PS51220">
    <property type="entry name" value="NIDO"/>
    <property type="match status" value="1"/>
</dbReference>
<dbReference type="PROSITE" id="PS50923">
    <property type="entry name" value="SUSHI"/>
    <property type="match status" value="1"/>
</dbReference>
<gene>
    <name evidence="12" type="primary">Sned1</name>
</gene>
<comment type="subcellular location">
    <subcellularLocation>
        <location evidence="1">Secreted</location>
        <location evidence="1">Extracellular space</location>
        <location evidence="1">Extracellular matrix</location>
    </subcellularLocation>
    <text evidence="1">Forms microfibrils within the extracellular matrix and colocalizes with fibronectin (FN1).</text>
</comment>
<comment type="tissue specificity">
    <text evidence="9">Expressed in liver.</text>
</comment>
<comment type="PTM">
    <text evidence="2">Phosphorylated on serine and threonine residues.</text>
</comment>
<comment type="PTM">
    <text evidence="2">N-glycosylated.</text>
</comment>
<accession>Q5ZQU0</accession>
<accession>Q336F3</accession>
<sequence>MRRGAAWALLLAAALGLGARGVRAAVALADFYPFGTKRGDAVTPKQDDGGSGLQPLSVPFPFFGAEHSGLYVNNNGIISFLKEVSQFTPVAFPIAKDRCVVAAFWADVDNRRAGDVYYREATDAAMLNRATEDIRRYFPELPDFSATWVFVATWYRVTFFGGSSSSPVNTFQTVLITDGRFSFTIFNYESILWTTGTHASSGGDADGLGGIAAQAGFNAGDGHRYFNIPGSRTADMAEVETTTNVGVPGRWAFRIDDAQVRVGGCGHTTSVCLVLRPCLNGGKCIDDCVTGNPSYTCSCLAGFTGRRCHLDVNECASHPCQNGGTCTHGVNSFSCQCPAGFQGPTCESAQSPCDNKVCQNGGQCQAESSSAVCVCQAGYTGATCETDVDECSSDPCLNGGSCVDLVGNYSCICVEPFEGPQCETGSYVVPSPCLSNPCLNGGTCVDADQGYVCECPEGFMGLDCRERILNDCDCRNGGRCLGANTTICQCPPGFFGLLCEFEVTATPCNMNTQCPDGGYCMEYGGSYLCVCHTDHNISHSLPSPCDSDPCFNGGSCDAHEDSYTCECPRGFHGRHCEKARPHLCSSGPCRNGGTCKETGDEYRCTCPYRFTGRHCEIGKPDSCASGPCHNGGTCFHYIGKYKCDCPPGFSGRHCEIAPSPCFRSPCMNGGICEDLGTDFSCHCQPGYTGHRCQAEVDCGQPEEVKHATMRLNGTRMGSVALYTCDPGFSLSVLSHMRVCQPQGVWSQPPQCIEVDECQSQPCLHKGSCQDLIAGYQCLCSPGYEGVHCELETDECQAQPCRNGGSCRDLPGAFICQCPEGFVGTHCETEVDACASSPCQHGGRCEDGGGAYLCVCPEGFFGYNCETVSDPCFSSPCGGRGYCLASNGSHSCTCKVGYTGKDCTKELLPPTALRVERVEESGVSISWSPPEGTTARQVLDGYAVTYASSDGSSRRTDFVDRSRSSHQLRALAAGRAYNISVFSVKRNTNNKNDISRPAALLTRTRPRPIEDFEVTNISANAISVQWALHRIQHATVSRVRVSVLYPEDTVVQSTEVDRSVDRLTFGDLLPGRRYSVRLTTLSGPGGAEYPTESLASAPLNVWTRPLPPANLTASRVTATSAHMVWDPPTPGISLEAYVINVTTSQNTKSRYIPNGKLVSYTVRDLMPGRRYQLSVTAVQSTEQGQLHSEPAHLYIITSPRDGTDRRWHQGGHHSRMLRNRPAPLRLPELRLLNDHGAPETPTQPPRFSELVDGRARVSARFGGLPSRAVTVRSQPTTPVPLKNTEAPEQARLALQLPKNNSKDTESTPGSCSEDTCQNGGTCVPGANAHSCDCRPGFKGRHCELACEKVPRPCTRLFSETKSFPVWEGDVCHHVYKKVYKVHQDVCFKERCQSTSLKKLKQESN</sequence>